<proteinExistence type="evidence at protein level"/>
<gene>
    <name type="ordered locus">BMQ_1331</name>
</gene>
<feature type="chain" id="PRO_0000408258" description="N-acetyldiaminopimelate deacetylase">
    <location>
        <begin position="1"/>
        <end position="375"/>
    </location>
</feature>
<feature type="active site" evidence="1">
    <location>
        <position position="69"/>
    </location>
</feature>
<feature type="active site" description="Proton acceptor" evidence="1">
    <location>
        <position position="128"/>
    </location>
</feature>
<organism>
    <name type="scientific">Priestia megaterium (strain ATCC 12872 / QMB1551)</name>
    <name type="common">Bacillus megaterium</name>
    <dbReference type="NCBI Taxonomy" id="545693"/>
    <lineage>
        <taxon>Bacteria</taxon>
        <taxon>Bacillati</taxon>
        <taxon>Bacillota</taxon>
        <taxon>Bacilli</taxon>
        <taxon>Bacillales</taxon>
        <taxon>Bacillaceae</taxon>
        <taxon>Priestia</taxon>
    </lineage>
</organism>
<accession>D5E0A1</accession>
<sequence length="375" mass="42228">MAENEFVKIRRELHKIPELGFQEVKTQRFLLDYINTLPQERLEVKTWKTGLFVKVHGTNPTKTIGYRADIDGLPITEETNYSFQSQHEGLMHACGHDMHMAIGLGVLTYFAQHEIKDNVLFIFQPAEEGPGGAQPMLQSDIMKEWLPDFIFALHVAPEYPVGSIALKEGLLFANTSELFIDLKGKGGHAAYPHTTNDMVVAACQLVSQLQTIVARNVDPLDSAVITVGKIQGGTVQNIIAERARIEGTIRTLSPESMTRVKERIEAIVKGVEVGYQCETAIDYGCMYHQVYNHHEVTREFMEFAKEQTDVDVIECKEAMTGEDFGYMLKDIPGFMFWLGVQSEYGLHHAKLQPHEGAIDIAISLITKYFEHKGNQ</sequence>
<comment type="function">
    <text evidence="2">Catalyzes the conversion of N-acetyl-diaminopimelate to diaminopimelate and acetate.</text>
</comment>
<comment type="catalytic activity">
    <reaction evidence="4">
        <text>N-acetyl-(2S,6S)-2,6-diaminopimelate + H2O = (2S,6S)-2,6-diaminopimelate + acetate</text>
        <dbReference type="Rhea" id="RHEA:20405"/>
        <dbReference type="ChEBI" id="CHEBI:15377"/>
        <dbReference type="ChEBI" id="CHEBI:30089"/>
        <dbReference type="ChEBI" id="CHEBI:57609"/>
        <dbReference type="ChEBI" id="CHEBI:58767"/>
        <dbReference type="EC" id="3.5.1.47"/>
    </reaction>
</comment>
<comment type="pathway">
    <text>Amino-acid biosynthesis; L-lysine biosynthesis via DAP pathway; LL-2,6-diaminopimelate from (S)-tetrahydrodipicolinate (acetylase route): step 3/3.</text>
</comment>
<comment type="similarity">
    <text evidence="3">Belongs to the peptidase M20A family. N-acetyldiaminopimelate deacetylase subfamily.</text>
</comment>
<dbReference type="EC" id="3.5.1.47" evidence="4"/>
<dbReference type="EMBL" id="CP001983">
    <property type="protein sequence ID" value="ADE68364.1"/>
    <property type="molecule type" value="Genomic_DNA"/>
</dbReference>
<dbReference type="RefSeq" id="WP_013056039.1">
    <property type="nucleotide sequence ID" value="NC_014019.1"/>
</dbReference>
<dbReference type="SMR" id="D5E0A1"/>
<dbReference type="STRING" id="545693.BMQ_1331"/>
<dbReference type="MEROPS" id="M20.A27"/>
<dbReference type="KEGG" id="bmq:BMQ_1331"/>
<dbReference type="eggNOG" id="COG1473">
    <property type="taxonomic scope" value="Bacteria"/>
</dbReference>
<dbReference type="HOGENOM" id="CLU_023257_0_1_9"/>
<dbReference type="UniPathway" id="UPA00034">
    <property type="reaction ID" value="UER00024"/>
</dbReference>
<dbReference type="Proteomes" id="UP000000935">
    <property type="component" value="Chromosome"/>
</dbReference>
<dbReference type="GO" id="GO:0050118">
    <property type="term" value="F:N-acetyldiaminopimelate deacetylase activity"/>
    <property type="evidence" value="ECO:0000314"/>
    <property type="project" value="UniProtKB"/>
</dbReference>
<dbReference type="GO" id="GO:0019877">
    <property type="term" value="P:diaminopimelate biosynthetic process"/>
    <property type="evidence" value="ECO:0000314"/>
    <property type="project" value="UniProtKB"/>
</dbReference>
<dbReference type="GO" id="GO:0009089">
    <property type="term" value="P:lysine biosynthetic process via diaminopimelate"/>
    <property type="evidence" value="ECO:0000314"/>
    <property type="project" value="UniProtKB"/>
</dbReference>
<dbReference type="CDD" id="cd05670">
    <property type="entry name" value="M20_Acy1_YkuR-like"/>
    <property type="match status" value="1"/>
</dbReference>
<dbReference type="FunFam" id="3.30.70.360:FF:000001">
    <property type="entry name" value="N-acetyldiaminopimelate deacetylase"/>
    <property type="match status" value="1"/>
</dbReference>
<dbReference type="Gene3D" id="3.30.70.360">
    <property type="match status" value="1"/>
</dbReference>
<dbReference type="Gene3D" id="3.40.630.10">
    <property type="entry name" value="Zn peptidases"/>
    <property type="match status" value="1"/>
</dbReference>
<dbReference type="HAMAP" id="MF_01692">
    <property type="entry name" value="DapEL"/>
    <property type="match status" value="1"/>
</dbReference>
<dbReference type="InterPro" id="IPR023905">
    <property type="entry name" value="AcetylDAP_deacetylase"/>
</dbReference>
<dbReference type="InterPro" id="IPR017439">
    <property type="entry name" value="Amidohydrolase"/>
</dbReference>
<dbReference type="InterPro" id="IPR036264">
    <property type="entry name" value="Bact_exopeptidase_dim_dom"/>
</dbReference>
<dbReference type="InterPro" id="IPR002933">
    <property type="entry name" value="Peptidase_M20"/>
</dbReference>
<dbReference type="InterPro" id="IPR011650">
    <property type="entry name" value="Peptidase_M20_dimer"/>
</dbReference>
<dbReference type="NCBIfam" id="TIGR01891">
    <property type="entry name" value="amidohydrolases"/>
    <property type="match status" value="1"/>
</dbReference>
<dbReference type="PANTHER" id="PTHR11014:SF98">
    <property type="entry name" value="N-ACETYLDIAMINOPIMELATE DEACETYLASE"/>
    <property type="match status" value="1"/>
</dbReference>
<dbReference type="PANTHER" id="PTHR11014">
    <property type="entry name" value="PEPTIDASE M20 FAMILY MEMBER"/>
    <property type="match status" value="1"/>
</dbReference>
<dbReference type="Pfam" id="PF07687">
    <property type="entry name" value="M20_dimer"/>
    <property type="match status" value="1"/>
</dbReference>
<dbReference type="Pfam" id="PF01546">
    <property type="entry name" value="Peptidase_M20"/>
    <property type="match status" value="1"/>
</dbReference>
<dbReference type="PIRSF" id="PIRSF005962">
    <property type="entry name" value="Pept_M20D_amidohydro"/>
    <property type="match status" value="1"/>
</dbReference>
<dbReference type="SUPFAM" id="SSF55031">
    <property type="entry name" value="Bacterial exopeptidase dimerisation domain"/>
    <property type="match status" value="1"/>
</dbReference>
<dbReference type="SUPFAM" id="SSF53187">
    <property type="entry name" value="Zn-dependent exopeptidases"/>
    <property type="match status" value="1"/>
</dbReference>
<reference key="1">
    <citation type="journal article" date="2011" name="J. Bacteriol.">
        <title>Genome sequences of the biotechnologically important Bacillus megaterium strains QM B1551 and DSM319.</title>
        <authorList>
            <person name="Eppinger M."/>
            <person name="Bunk B."/>
            <person name="Johns M.A."/>
            <person name="Edirisinghe J.N."/>
            <person name="Kutumbaka K.K."/>
            <person name="Koenig S.S."/>
            <person name="Creasy H.H."/>
            <person name="Rosovitz M.J."/>
            <person name="Riley D.R."/>
            <person name="Daugherty S."/>
            <person name="Martin M."/>
            <person name="Elbourne L.D."/>
            <person name="Paulsen I."/>
            <person name="Biedendieck R."/>
            <person name="Braun C."/>
            <person name="Grayburn S."/>
            <person name="Dhingra S."/>
            <person name="Lukyanchuk V."/>
            <person name="Ball B."/>
            <person name="Ul-Qamar R."/>
            <person name="Seibel J."/>
            <person name="Bremer E."/>
            <person name="Jahn D."/>
            <person name="Ravel J."/>
            <person name="Vary P.S."/>
        </authorList>
    </citation>
    <scope>NUCLEOTIDE SEQUENCE [LARGE SCALE GENOMIC DNA]</scope>
    <source>
        <strain>ATCC 12872 / DSM 1804 / QMB1551</strain>
    </source>
</reference>
<reference key="2">
    <citation type="journal article" date="1967" name="J. Biol. Chem.">
        <title>Biosynthesis of alpha,epsilon-diaminopimelic acid in Bacillus megaterium.</title>
        <authorList>
            <person name="Sundharadas G."/>
            <person name="Gilvarg C."/>
        </authorList>
    </citation>
    <scope>FUNCTION AS A N-ACETYLDIAMINOPIMELATE DEACETYLASE AND IN LYSINE BIOSYNTHESIS</scope>
    <scope>CATALYTIC ACTIVITY</scope>
</reference>
<name>DAPEL_PRIM1</name>
<keyword id="KW-0028">Amino-acid biosynthesis</keyword>
<keyword id="KW-0220">Diaminopimelate biosynthesis</keyword>
<keyword id="KW-0378">Hydrolase</keyword>
<keyword id="KW-0457">Lysine biosynthesis</keyword>
<keyword id="KW-1185">Reference proteome</keyword>
<evidence type="ECO:0000250" key="1"/>
<evidence type="ECO:0000269" key="2">
    <source>
    </source>
</evidence>
<evidence type="ECO:0000305" key="3"/>
<evidence type="ECO:0000305" key="4">
    <source>
    </source>
</evidence>
<protein>
    <recommendedName>
        <fullName>N-acetyldiaminopimelate deacetylase</fullName>
        <ecNumber evidence="4">3.5.1.47</ecNumber>
    </recommendedName>
</protein>